<reference key="1">
    <citation type="journal article" date="2002" name="Nat. Genet.">
        <title>Genome sequence of the endocellular obligate symbiont of tsetse flies, Wigglesworthia glossinidia.</title>
        <authorList>
            <person name="Akman L."/>
            <person name="Yamashita A."/>
            <person name="Watanabe H."/>
            <person name="Oshima K."/>
            <person name="Shiba T."/>
            <person name="Hattori M."/>
            <person name="Aksoy S."/>
        </authorList>
    </citation>
    <scope>NUCLEOTIDE SEQUENCE [LARGE SCALE GENOMIC DNA]</scope>
</reference>
<accession>Q8D254</accession>
<comment type="function">
    <text evidence="1">Plays an important role in DNA replication, recombination and repair. Binds to ssDNA and to an array of partner proteins to recruit them to their sites of action during DNA metabolism.</text>
</comment>
<comment type="subunit">
    <text evidence="1">Homotetramer.</text>
</comment>
<comment type="sequence caution" evidence="2">
    <conflict type="erroneous initiation">
        <sequence resource="EMBL-CDS" id="BAC24646"/>
    </conflict>
</comment>
<evidence type="ECO:0000255" key="1">
    <source>
        <dbReference type="HAMAP-Rule" id="MF_00984"/>
    </source>
</evidence>
<evidence type="ECO:0000305" key="2"/>
<dbReference type="EMBL" id="BA000021">
    <property type="protein sequence ID" value="BAC24646.1"/>
    <property type="status" value="ALT_INIT"/>
    <property type="molecule type" value="Genomic_DNA"/>
</dbReference>
<dbReference type="SMR" id="Q8D254"/>
<dbReference type="STRING" id="36870.gene:10369004"/>
<dbReference type="KEGG" id="wbr:ssb"/>
<dbReference type="eggNOG" id="COG0629">
    <property type="taxonomic scope" value="Bacteria"/>
</dbReference>
<dbReference type="HOGENOM" id="CLU_078758_0_2_6"/>
<dbReference type="OrthoDB" id="9809878at2"/>
<dbReference type="Proteomes" id="UP000000562">
    <property type="component" value="Chromosome"/>
</dbReference>
<dbReference type="GO" id="GO:0009295">
    <property type="term" value="C:nucleoid"/>
    <property type="evidence" value="ECO:0007669"/>
    <property type="project" value="TreeGrafter"/>
</dbReference>
<dbReference type="GO" id="GO:0003697">
    <property type="term" value="F:single-stranded DNA binding"/>
    <property type="evidence" value="ECO:0007669"/>
    <property type="project" value="UniProtKB-UniRule"/>
</dbReference>
<dbReference type="GO" id="GO:0006310">
    <property type="term" value="P:DNA recombination"/>
    <property type="evidence" value="ECO:0007669"/>
    <property type="project" value="UniProtKB-UniRule"/>
</dbReference>
<dbReference type="GO" id="GO:0006281">
    <property type="term" value="P:DNA repair"/>
    <property type="evidence" value="ECO:0007669"/>
    <property type="project" value="UniProtKB-UniRule"/>
</dbReference>
<dbReference type="GO" id="GO:0006260">
    <property type="term" value="P:DNA replication"/>
    <property type="evidence" value="ECO:0007669"/>
    <property type="project" value="UniProtKB-UniRule"/>
</dbReference>
<dbReference type="CDD" id="cd04496">
    <property type="entry name" value="SSB_OBF"/>
    <property type="match status" value="1"/>
</dbReference>
<dbReference type="Gene3D" id="2.40.50.140">
    <property type="entry name" value="Nucleic acid-binding proteins"/>
    <property type="match status" value="1"/>
</dbReference>
<dbReference type="HAMAP" id="MF_00984">
    <property type="entry name" value="SSB"/>
    <property type="match status" value="1"/>
</dbReference>
<dbReference type="InterPro" id="IPR012340">
    <property type="entry name" value="NA-bd_OB-fold"/>
</dbReference>
<dbReference type="InterPro" id="IPR000424">
    <property type="entry name" value="Primosome_PriB/ssb"/>
</dbReference>
<dbReference type="InterPro" id="IPR011344">
    <property type="entry name" value="ssDNA-bd"/>
</dbReference>
<dbReference type="NCBIfam" id="TIGR00621">
    <property type="entry name" value="ssb"/>
    <property type="match status" value="1"/>
</dbReference>
<dbReference type="PANTHER" id="PTHR10302">
    <property type="entry name" value="SINGLE-STRANDED DNA-BINDING PROTEIN"/>
    <property type="match status" value="1"/>
</dbReference>
<dbReference type="PANTHER" id="PTHR10302:SF27">
    <property type="entry name" value="SINGLE-STRANDED DNA-BINDING PROTEIN"/>
    <property type="match status" value="1"/>
</dbReference>
<dbReference type="Pfam" id="PF00436">
    <property type="entry name" value="SSB"/>
    <property type="match status" value="1"/>
</dbReference>
<dbReference type="PIRSF" id="PIRSF002070">
    <property type="entry name" value="SSB"/>
    <property type="match status" value="1"/>
</dbReference>
<dbReference type="SUPFAM" id="SSF50249">
    <property type="entry name" value="Nucleic acid-binding proteins"/>
    <property type="match status" value="1"/>
</dbReference>
<dbReference type="PROSITE" id="PS50935">
    <property type="entry name" value="SSB"/>
    <property type="match status" value="1"/>
</dbReference>
<name>SSB_WIGBR</name>
<feature type="chain" id="PRO_0000096139" description="Single-stranded DNA-binding protein">
    <location>
        <begin position="1"/>
        <end position="163"/>
    </location>
</feature>
<feature type="domain" description="SSB" evidence="1">
    <location>
        <begin position="6"/>
        <end position="111"/>
    </location>
</feature>
<feature type="short sequence motif" description="Important for interaction with partner proteins" evidence="1">
    <location>
        <begin position="158"/>
        <end position="163"/>
    </location>
</feature>
<organism>
    <name type="scientific">Wigglesworthia glossinidia brevipalpis</name>
    <dbReference type="NCBI Taxonomy" id="36870"/>
    <lineage>
        <taxon>Bacteria</taxon>
        <taxon>Pseudomonadati</taxon>
        <taxon>Pseudomonadota</taxon>
        <taxon>Gammaproteobacteria</taxon>
        <taxon>Enterobacterales</taxon>
        <taxon>Erwiniaceae</taxon>
        <taxon>Wigglesworthia</taxon>
    </lineage>
</organism>
<proteinExistence type="inferred from homology"/>
<sequence length="163" mass="18782">MTSRGINKVILIGNLGQDPEVRYIPNGNAITNLSLATSENWRDKNTGESKEKTEWHRVILFGKLAEVAGEYLKKGSQVYIEGNLQTRKWQDQNGQDRYITEIVVGINGCMQMLGNRASYDYTKPEAKEWNKKNKNIINEKQDIKESKKNKIEEEINFDDDIPF</sequence>
<gene>
    <name type="primary">ssb</name>
    <name type="ordered locus">WIGBR5000</name>
</gene>
<keyword id="KW-0227">DNA damage</keyword>
<keyword id="KW-0233">DNA recombination</keyword>
<keyword id="KW-0234">DNA repair</keyword>
<keyword id="KW-0235">DNA replication</keyword>
<keyword id="KW-0238">DNA-binding</keyword>
<keyword id="KW-1185">Reference proteome</keyword>
<protein>
    <recommendedName>
        <fullName evidence="1">Single-stranded DNA-binding protein</fullName>
        <shortName evidence="1">SSB</shortName>
    </recommendedName>
</protein>